<dbReference type="EC" id="5.4.2.10" evidence="1"/>
<dbReference type="EMBL" id="CP001287">
    <property type="protein sequence ID" value="ACK64900.1"/>
    <property type="molecule type" value="Genomic_DNA"/>
</dbReference>
<dbReference type="RefSeq" id="WP_012594176.1">
    <property type="nucleotide sequence ID" value="NC_011726.1"/>
</dbReference>
<dbReference type="SMR" id="B7JYN0"/>
<dbReference type="STRING" id="41431.PCC8801_0818"/>
<dbReference type="KEGG" id="cyp:PCC8801_0818"/>
<dbReference type="eggNOG" id="COG1109">
    <property type="taxonomic scope" value="Bacteria"/>
</dbReference>
<dbReference type="HOGENOM" id="CLU_016950_7_0_3"/>
<dbReference type="OrthoDB" id="9806956at2"/>
<dbReference type="Proteomes" id="UP000008204">
    <property type="component" value="Chromosome"/>
</dbReference>
<dbReference type="GO" id="GO:0005829">
    <property type="term" value="C:cytosol"/>
    <property type="evidence" value="ECO:0007669"/>
    <property type="project" value="TreeGrafter"/>
</dbReference>
<dbReference type="GO" id="GO:0000287">
    <property type="term" value="F:magnesium ion binding"/>
    <property type="evidence" value="ECO:0007669"/>
    <property type="project" value="UniProtKB-UniRule"/>
</dbReference>
<dbReference type="GO" id="GO:0008966">
    <property type="term" value="F:phosphoglucosamine mutase activity"/>
    <property type="evidence" value="ECO:0007669"/>
    <property type="project" value="UniProtKB-UniRule"/>
</dbReference>
<dbReference type="GO" id="GO:0004615">
    <property type="term" value="F:phosphomannomutase activity"/>
    <property type="evidence" value="ECO:0007669"/>
    <property type="project" value="TreeGrafter"/>
</dbReference>
<dbReference type="GO" id="GO:0005975">
    <property type="term" value="P:carbohydrate metabolic process"/>
    <property type="evidence" value="ECO:0007669"/>
    <property type="project" value="InterPro"/>
</dbReference>
<dbReference type="GO" id="GO:0009252">
    <property type="term" value="P:peptidoglycan biosynthetic process"/>
    <property type="evidence" value="ECO:0007669"/>
    <property type="project" value="TreeGrafter"/>
</dbReference>
<dbReference type="GO" id="GO:0006048">
    <property type="term" value="P:UDP-N-acetylglucosamine biosynthetic process"/>
    <property type="evidence" value="ECO:0007669"/>
    <property type="project" value="TreeGrafter"/>
</dbReference>
<dbReference type="CDD" id="cd05802">
    <property type="entry name" value="GlmM"/>
    <property type="match status" value="1"/>
</dbReference>
<dbReference type="FunFam" id="3.30.310.50:FF:000001">
    <property type="entry name" value="Phosphoglucosamine mutase"/>
    <property type="match status" value="1"/>
</dbReference>
<dbReference type="FunFam" id="3.40.120.10:FF:000001">
    <property type="entry name" value="Phosphoglucosamine mutase"/>
    <property type="match status" value="1"/>
</dbReference>
<dbReference type="FunFam" id="3.40.120.10:FF:000003">
    <property type="entry name" value="Phosphoglucosamine mutase"/>
    <property type="match status" value="1"/>
</dbReference>
<dbReference type="Gene3D" id="3.40.120.10">
    <property type="entry name" value="Alpha-D-Glucose-1,6-Bisphosphate, subunit A, domain 3"/>
    <property type="match status" value="3"/>
</dbReference>
<dbReference type="Gene3D" id="3.30.310.50">
    <property type="entry name" value="Alpha-D-phosphohexomutase, C-terminal domain"/>
    <property type="match status" value="1"/>
</dbReference>
<dbReference type="HAMAP" id="MF_01554_B">
    <property type="entry name" value="GlmM_B"/>
    <property type="match status" value="1"/>
</dbReference>
<dbReference type="InterPro" id="IPR005844">
    <property type="entry name" value="A-D-PHexomutase_a/b/a-I"/>
</dbReference>
<dbReference type="InterPro" id="IPR016055">
    <property type="entry name" value="A-D-PHexomutase_a/b/a-I/II/III"/>
</dbReference>
<dbReference type="InterPro" id="IPR005845">
    <property type="entry name" value="A-D-PHexomutase_a/b/a-II"/>
</dbReference>
<dbReference type="InterPro" id="IPR005846">
    <property type="entry name" value="A-D-PHexomutase_a/b/a-III"/>
</dbReference>
<dbReference type="InterPro" id="IPR005843">
    <property type="entry name" value="A-D-PHexomutase_C"/>
</dbReference>
<dbReference type="InterPro" id="IPR036900">
    <property type="entry name" value="A-D-PHexomutase_C_sf"/>
</dbReference>
<dbReference type="InterPro" id="IPR016066">
    <property type="entry name" value="A-D-PHexomutase_CS"/>
</dbReference>
<dbReference type="InterPro" id="IPR005841">
    <property type="entry name" value="Alpha-D-phosphohexomutase_SF"/>
</dbReference>
<dbReference type="InterPro" id="IPR006352">
    <property type="entry name" value="GlmM_bact"/>
</dbReference>
<dbReference type="InterPro" id="IPR050060">
    <property type="entry name" value="Phosphoglucosamine_mutase"/>
</dbReference>
<dbReference type="NCBIfam" id="TIGR01455">
    <property type="entry name" value="glmM"/>
    <property type="match status" value="1"/>
</dbReference>
<dbReference type="PANTHER" id="PTHR42946:SF1">
    <property type="entry name" value="PHOSPHOGLUCOMUTASE (ALPHA-D-GLUCOSE-1,6-BISPHOSPHATE-DEPENDENT)"/>
    <property type="match status" value="1"/>
</dbReference>
<dbReference type="PANTHER" id="PTHR42946">
    <property type="entry name" value="PHOSPHOHEXOSE MUTASE"/>
    <property type="match status" value="1"/>
</dbReference>
<dbReference type="Pfam" id="PF02878">
    <property type="entry name" value="PGM_PMM_I"/>
    <property type="match status" value="1"/>
</dbReference>
<dbReference type="Pfam" id="PF02879">
    <property type="entry name" value="PGM_PMM_II"/>
    <property type="match status" value="1"/>
</dbReference>
<dbReference type="Pfam" id="PF02880">
    <property type="entry name" value="PGM_PMM_III"/>
    <property type="match status" value="1"/>
</dbReference>
<dbReference type="Pfam" id="PF00408">
    <property type="entry name" value="PGM_PMM_IV"/>
    <property type="match status" value="1"/>
</dbReference>
<dbReference type="PRINTS" id="PR00509">
    <property type="entry name" value="PGMPMM"/>
</dbReference>
<dbReference type="SUPFAM" id="SSF55957">
    <property type="entry name" value="Phosphoglucomutase, C-terminal domain"/>
    <property type="match status" value="1"/>
</dbReference>
<dbReference type="SUPFAM" id="SSF53738">
    <property type="entry name" value="Phosphoglucomutase, first 3 domains"/>
    <property type="match status" value="3"/>
</dbReference>
<dbReference type="PROSITE" id="PS00710">
    <property type="entry name" value="PGM_PMM"/>
    <property type="match status" value="1"/>
</dbReference>
<comment type="function">
    <text evidence="1">Catalyzes the conversion of glucosamine-6-phosphate to glucosamine-1-phosphate.</text>
</comment>
<comment type="catalytic activity">
    <reaction evidence="1">
        <text>alpha-D-glucosamine 1-phosphate = D-glucosamine 6-phosphate</text>
        <dbReference type="Rhea" id="RHEA:23424"/>
        <dbReference type="ChEBI" id="CHEBI:58516"/>
        <dbReference type="ChEBI" id="CHEBI:58725"/>
        <dbReference type="EC" id="5.4.2.10"/>
    </reaction>
</comment>
<comment type="cofactor">
    <cofactor evidence="1">
        <name>Mg(2+)</name>
        <dbReference type="ChEBI" id="CHEBI:18420"/>
    </cofactor>
    <text evidence="1">Binds 1 Mg(2+) ion per subunit.</text>
</comment>
<comment type="PTM">
    <text evidence="1">Activated by phosphorylation.</text>
</comment>
<comment type="similarity">
    <text evidence="1">Belongs to the phosphohexose mutase family.</text>
</comment>
<accession>B7JYN0</accession>
<reference key="1">
    <citation type="journal article" date="2011" name="MBio">
        <title>Novel metabolic attributes of the genus Cyanothece, comprising a group of unicellular nitrogen-fixing Cyanobacteria.</title>
        <authorList>
            <person name="Bandyopadhyay A."/>
            <person name="Elvitigala T."/>
            <person name="Welsh E."/>
            <person name="Stockel J."/>
            <person name="Liberton M."/>
            <person name="Min H."/>
            <person name="Sherman L.A."/>
            <person name="Pakrasi H.B."/>
        </authorList>
    </citation>
    <scope>NUCLEOTIDE SEQUENCE [LARGE SCALE GENOMIC DNA]</scope>
    <source>
        <strain>PCC 8801 / RF-1</strain>
    </source>
</reference>
<gene>
    <name evidence="1" type="primary">glmM</name>
    <name type="ordered locus">PCC8801_0818</name>
</gene>
<organism>
    <name type="scientific">Rippkaea orientalis (strain PCC 8801 / RF-1)</name>
    <name type="common">Cyanothece sp. (strain PCC 8801)</name>
    <dbReference type="NCBI Taxonomy" id="41431"/>
    <lineage>
        <taxon>Bacteria</taxon>
        <taxon>Bacillati</taxon>
        <taxon>Cyanobacteriota</taxon>
        <taxon>Cyanophyceae</taxon>
        <taxon>Oscillatoriophycideae</taxon>
        <taxon>Chroococcales</taxon>
        <taxon>Aphanothecaceae</taxon>
        <taxon>Rippkaea</taxon>
        <taxon>Rippkaea orientalis</taxon>
    </lineage>
</organism>
<protein>
    <recommendedName>
        <fullName evidence="1">Phosphoglucosamine mutase</fullName>
        <ecNumber evidence="1">5.4.2.10</ecNumber>
    </recommendedName>
</protein>
<keyword id="KW-0413">Isomerase</keyword>
<keyword id="KW-0460">Magnesium</keyword>
<keyword id="KW-0479">Metal-binding</keyword>
<keyword id="KW-0597">Phosphoprotein</keyword>
<keyword id="KW-1185">Reference proteome</keyword>
<name>GLMM_RIPO1</name>
<feature type="chain" id="PRO_1000201084" description="Phosphoglucosamine mutase">
    <location>
        <begin position="1"/>
        <end position="485"/>
    </location>
</feature>
<feature type="active site" description="Phosphoserine intermediate" evidence="1">
    <location>
        <position position="133"/>
    </location>
</feature>
<feature type="binding site" description="via phosphate group" evidence="1">
    <location>
        <position position="133"/>
    </location>
    <ligand>
        <name>Mg(2+)</name>
        <dbReference type="ChEBI" id="CHEBI:18420"/>
    </ligand>
</feature>
<feature type="binding site" evidence="1">
    <location>
        <position position="274"/>
    </location>
    <ligand>
        <name>Mg(2+)</name>
        <dbReference type="ChEBI" id="CHEBI:18420"/>
    </ligand>
</feature>
<feature type="binding site" evidence="1">
    <location>
        <position position="276"/>
    </location>
    <ligand>
        <name>Mg(2+)</name>
        <dbReference type="ChEBI" id="CHEBI:18420"/>
    </ligand>
</feature>
<feature type="binding site" evidence="1">
    <location>
        <position position="278"/>
    </location>
    <ligand>
        <name>Mg(2+)</name>
        <dbReference type="ChEBI" id="CHEBI:18420"/>
    </ligand>
</feature>
<feature type="modified residue" description="Phosphoserine" evidence="1">
    <location>
        <position position="133"/>
    </location>
</feature>
<sequence length="485" mass="52921">MVSSLSRNGNSHHNGVNVAITSGFSTKLAPLPNGPLFGTDGIRGKAGDLLTAPFALELGFWAGQVLKANKVTPGPVIIGQDSRNSSDMLAMAMAAGLTSAGLEVWNLGLCPTPCVAHLTRISQAMGGIMISASHNPPEDNGIKFFNHEGTKLSQTLAQQIEDGLRGHLSFDRDRNREWGKTYHQANLVDTYCQFLQETLPENLDLQGMRVVLDLAWGASVEVAPKLFKALGAEVICLHDRPDGNRINVNCGSTHLDLLQQAIKEHQADLGFAFDGDADRVMAVDSQGRVVDGDYILYLWGKHLLEQGKLPHNLLIGTVMANLGFERAWEALGGQLMRTAVGDRHVQAQMWETGAILGGEQSGHIICHHHSFSGDGVQTALHLAALVRQSGESLATLVNESFQTYPQILRNIRVEDRDRRRYWQECTPVMEAVNQAEAAMGNTGRILVRPSGTEPLIRVMVESCSADDANYWVNYLVNVVEQHLAN</sequence>
<proteinExistence type="inferred from homology"/>
<evidence type="ECO:0000255" key="1">
    <source>
        <dbReference type="HAMAP-Rule" id="MF_01554"/>
    </source>
</evidence>